<accession>B4TBF2</accession>
<organism>
    <name type="scientific">Salmonella heidelberg (strain SL476)</name>
    <dbReference type="NCBI Taxonomy" id="454169"/>
    <lineage>
        <taxon>Bacteria</taxon>
        <taxon>Pseudomonadati</taxon>
        <taxon>Pseudomonadota</taxon>
        <taxon>Gammaproteobacteria</taxon>
        <taxon>Enterobacterales</taxon>
        <taxon>Enterobacteriaceae</taxon>
        <taxon>Salmonella</taxon>
    </lineage>
</organism>
<proteinExistence type="inferred from homology"/>
<protein>
    <recommendedName>
        <fullName evidence="1">Anaerobic glycerol-3-phosphate dehydrogenase subunit B</fullName>
        <shortName evidence="1">Anaerobic G-3-P dehydrogenase subunit B</shortName>
        <shortName evidence="1">Anaerobic G3Pdhase B</shortName>
        <ecNumber evidence="1">1.1.5.3</ecNumber>
    </recommendedName>
</protein>
<dbReference type="EC" id="1.1.5.3" evidence="1"/>
<dbReference type="EMBL" id="CP001120">
    <property type="protein sequence ID" value="ACF69590.1"/>
    <property type="molecule type" value="Genomic_DNA"/>
</dbReference>
<dbReference type="RefSeq" id="WP_000667146.1">
    <property type="nucleotide sequence ID" value="NC_011083.1"/>
</dbReference>
<dbReference type="KEGG" id="seh:SeHA_C2525"/>
<dbReference type="HOGENOM" id="CLU_047793_0_0_6"/>
<dbReference type="UniPathway" id="UPA00618">
    <property type="reaction ID" value="UER00673"/>
</dbReference>
<dbReference type="Proteomes" id="UP000001866">
    <property type="component" value="Chromosome"/>
</dbReference>
<dbReference type="GO" id="GO:0009331">
    <property type="term" value="C:glycerol-3-phosphate dehydrogenase (FAD) complex"/>
    <property type="evidence" value="ECO:0007669"/>
    <property type="project" value="InterPro"/>
</dbReference>
<dbReference type="GO" id="GO:0004368">
    <property type="term" value="F:glycerol-3-phosphate dehydrogenase (quinone) activity"/>
    <property type="evidence" value="ECO:0007669"/>
    <property type="project" value="UniProtKB-UniRule"/>
</dbReference>
<dbReference type="GO" id="GO:0009061">
    <property type="term" value="P:anaerobic respiration"/>
    <property type="evidence" value="ECO:0007669"/>
    <property type="project" value="TreeGrafter"/>
</dbReference>
<dbReference type="GO" id="GO:0019563">
    <property type="term" value="P:glycerol catabolic process"/>
    <property type="evidence" value="ECO:0007669"/>
    <property type="project" value="UniProtKB-UniRule"/>
</dbReference>
<dbReference type="GO" id="GO:0046168">
    <property type="term" value="P:glycerol-3-phosphate catabolic process"/>
    <property type="evidence" value="ECO:0007669"/>
    <property type="project" value="TreeGrafter"/>
</dbReference>
<dbReference type="FunFam" id="3.50.50.60:FF:000125">
    <property type="entry name" value="Anaerobic glycerol-3-phosphate dehydrogenase subunit B"/>
    <property type="match status" value="1"/>
</dbReference>
<dbReference type="Gene3D" id="3.50.50.60">
    <property type="entry name" value="FAD/NAD(P)-binding domain"/>
    <property type="match status" value="1"/>
</dbReference>
<dbReference type="HAMAP" id="MF_00753">
    <property type="entry name" value="Glycerol3P_GlpB"/>
    <property type="match status" value="1"/>
</dbReference>
<dbReference type="InterPro" id="IPR003953">
    <property type="entry name" value="FAD-dep_OxRdtase_2_FAD-bd"/>
</dbReference>
<dbReference type="InterPro" id="IPR050315">
    <property type="entry name" value="FAD-oxidoreductase_2"/>
</dbReference>
<dbReference type="InterPro" id="IPR036188">
    <property type="entry name" value="FAD/NAD-bd_sf"/>
</dbReference>
<dbReference type="InterPro" id="IPR009158">
    <property type="entry name" value="G3P_DH_GlpB_su"/>
</dbReference>
<dbReference type="NCBIfam" id="TIGR03378">
    <property type="entry name" value="glycerol3P_GlpB"/>
    <property type="match status" value="1"/>
</dbReference>
<dbReference type="NCBIfam" id="NF003718">
    <property type="entry name" value="PRK05329.1-1"/>
    <property type="match status" value="1"/>
</dbReference>
<dbReference type="NCBIfam" id="NF003719">
    <property type="entry name" value="PRK05329.1-2"/>
    <property type="match status" value="1"/>
</dbReference>
<dbReference type="NCBIfam" id="NF003720">
    <property type="entry name" value="PRK05329.1-3"/>
    <property type="match status" value="1"/>
</dbReference>
<dbReference type="PANTHER" id="PTHR43400:SF11">
    <property type="entry name" value="ANAEROBIC GLYCEROL-3-PHOSPHATE DEHYDROGENASE SUBUNIT B"/>
    <property type="match status" value="1"/>
</dbReference>
<dbReference type="PANTHER" id="PTHR43400">
    <property type="entry name" value="FUMARATE REDUCTASE"/>
    <property type="match status" value="1"/>
</dbReference>
<dbReference type="Pfam" id="PF00890">
    <property type="entry name" value="FAD_binding_2"/>
    <property type="match status" value="1"/>
</dbReference>
<dbReference type="PIRSF" id="PIRSF000141">
    <property type="entry name" value="Anaerobic_G3P_dh"/>
    <property type="match status" value="1"/>
</dbReference>
<dbReference type="SUPFAM" id="SSF51905">
    <property type="entry name" value="FAD/NAD(P)-binding domain"/>
    <property type="match status" value="1"/>
</dbReference>
<evidence type="ECO:0000255" key="1">
    <source>
        <dbReference type="HAMAP-Rule" id="MF_00753"/>
    </source>
</evidence>
<comment type="function">
    <text evidence="1">Conversion of glycerol 3-phosphate to dihydroxyacetone. Uses fumarate or nitrate as electron acceptor.</text>
</comment>
<comment type="catalytic activity">
    <reaction evidence="1">
        <text>a quinone + sn-glycerol 3-phosphate = dihydroxyacetone phosphate + a quinol</text>
        <dbReference type="Rhea" id="RHEA:18977"/>
        <dbReference type="ChEBI" id="CHEBI:24646"/>
        <dbReference type="ChEBI" id="CHEBI:57597"/>
        <dbReference type="ChEBI" id="CHEBI:57642"/>
        <dbReference type="ChEBI" id="CHEBI:132124"/>
        <dbReference type="EC" id="1.1.5.3"/>
    </reaction>
</comment>
<comment type="cofactor">
    <cofactor evidence="1">
        <name>FMN</name>
        <dbReference type="ChEBI" id="CHEBI:58210"/>
    </cofactor>
</comment>
<comment type="pathway">
    <text evidence="1">Polyol metabolism; glycerol degradation via glycerol kinase pathway; glycerone phosphate from sn-glycerol 3-phosphate (anaerobic route): step 1/1.</text>
</comment>
<comment type="subunit">
    <text evidence="1">Composed of a catalytic GlpA/B dimer and of membrane bound GlpC.</text>
</comment>
<comment type="similarity">
    <text evidence="1">Belongs to the anaerobic G-3-P dehydrogenase subunit B family.</text>
</comment>
<feature type="chain" id="PRO_1000133371" description="Anaerobic glycerol-3-phosphate dehydrogenase subunit B">
    <location>
        <begin position="1"/>
        <end position="419"/>
    </location>
</feature>
<keyword id="KW-0285">Flavoprotein</keyword>
<keyword id="KW-0288">FMN</keyword>
<keyword id="KW-0560">Oxidoreductase</keyword>
<reference key="1">
    <citation type="journal article" date="2011" name="J. Bacteriol.">
        <title>Comparative genomics of 28 Salmonella enterica isolates: evidence for CRISPR-mediated adaptive sublineage evolution.</title>
        <authorList>
            <person name="Fricke W.F."/>
            <person name="Mammel M.K."/>
            <person name="McDermott P.F."/>
            <person name="Tartera C."/>
            <person name="White D.G."/>
            <person name="Leclerc J.E."/>
            <person name="Ravel J."/>
            <person name="Cebula T.A."/>
        </authorList>
    </citation>
    <scope>NUCLEOTIDE SEQUENCE [LARGE SCALE GENOMIC DNA]</scope>
    <source>
        <strain>SL476</strain>
    </source>
</reference>
<sequence>MKFDTVIMGGGLAGLLCGLQLQQHGLRCAIVTRGQSALHFSSGSLDLLSALPDGQPVTDITAGLDALCRQAPEHPYSRLGAQKVLTLAQQAQTLLNASGAQLYGDVQQAHQRVTPLGTLRSTWLSSPEVPVWPLSAQRICVVGVSGLLDFQAHLAAASLRQRDLNVETAEIDLPELDVLRDNPTEFRAVNIARLLDNEEKWPLLYDALSPIATNCDMIIMPACFGLANDTLWRWLNERLPCALTLLPTLPPSVLGIRLHNQLQRQFVRQGGIWMPGDEVKKVTCRRGTVSEIWTRNHADIPLRPRFAVLASGSFFSSGLVAEREGIREPILGLDVQQTATRAEWYQQHFFDPQPWQQFGVVTDDAFRPSLAGNTVENLYAIGSVLAGFDPIAEGCGGGVCAVSALQAAHHIAERAGEQQ</sequence>
<gene>
    <name evidence="1" type="primary">glpB</name>
    <name type="ordered locus">SeHA_C2525</name>
</gene>
<name>GLPB_SALHS</name>